<proteinExistence type="inferred from homology"/>
<reference key="1">
    <citation type="journal article" date="1996" name="Proc. Natl. Acad. Sci. U.S.A.">
        <title>Organization and expression of canine olfactory receptor genes.</title>
        <authorList>
            <person name="Issel-Tarver L."/>
            <person name="Rine J."/>
        </authorList>
    </citation>
    <scope>NUCLEOTIDE SEQUENCE [GENOMIC DNA]</scope>
</reference>
<evidence type="ECO:0000255" key="1"/>
<evidence type="ECO:0000255" key="2">
    <source>
        <dbReference type="PROSITE-ProRule" id="PRU00521"/>
    </source>
</evidence>
<sequence>MDGNYTLVTEFILLGFPTRPELQIVLFLVFLTLYGIILTGNIGLMMLIRTDPHLQTPMYFFLSNLSFADLCFSSAIVPKMLVNFLSENKSISLYGCALQFYFSCAFADTESFILAAMAYDRYVAICNPLLYTVVMSRGICVWLIVLSYIGGNMSSLVHTSFAFILKYCDKNVINHFFCDLPPLLKLSCTDTSVNEWLLSTYGSSVEIFCFIVIVISYYFILRSVLRIRSSSGRKKTFSTCASHLTSVAIYQGTLLFIYSRPTYLYTPNTDKIISVFYTIIIPVLNPLIYSLRNKDVKDAAKRAVRLKVDSS</sequence>
<keyword id="KW-1003">Cell membrane</keyword>
<keyword id="KW-0297">G-protein coupled receptor</keyword>
<keyword id="KW-0325">Glycoprotein</keyword>
<keyword id="KW-0472">Membrane</keyword>
<keyword id="KW-0552">Olfaction</keyword>
<keyword id="KW-0675">Receptor</keyword>
<keyword id="KW-1185">Reference proteome</keyword>
<keyword id="KW-0716">Sensory transduction</keyword>
<keyword id="KW-0807">Transducer</keyword>
<keyword id="KW-0812">Transmembrane</keyword>
<keyword id="KW-1133">Transmembrane helix</keyword>
<organism>
    <name type="scientific">Canis lupus familiaris</name>
    <name type="common">Dog</name>
    <name type="synonym">Canis familiaris</name>
    <dbReference type="NCBI Taxonomy" id="9615"/>
    <lineage>
        <taxon>Eukaryota</taxon>
        <taxon>Metazoa</taxon>
        <taxon>Chordata</taxon>
        <taxon>Craniata</taxon>
        <taxon>Vertebrata</taxon>
        <taxon>Euteleostomi</taxon>
        <taxon>Mammalia</taxon>
        <taxon>Eutheria</taxon>
        <taxon>Laurasiatheria</taxon>
        <taxon>Carnivora</taxon>
        <taxon>Caniformia</taxon>
        <taxon>Canidae</taxon>
        <taxon>Canis</taxon>
    </lineage>
</organism>
<feature type="chain" id="PRO_0000150799" description="Olfactory receptor-like protein OLF1">
    <location>
        <begin position="1"/>
        <end position="311"/>
    </location>
</feature>
<feature type="topological domain" description="Extracellular" evidence="1">
    <location>
        <begin position="1"/>
        <end position="24"/>
    </location>
</feature>
<feature type="transmembrane region" description="Helical; Name=1" evidence="1">
    <location>
        <begin position="25"/>
        <end position="48"/>
    </location>
</feature>
<feature type="topological domain" description="Cytoplasmic" evidence="1">
    <location>
        <begin position="49"/>
        <end position="56"/>
    </location>
</feature>
<feature type="transmembrane region" description="Helical; Name=2" evidence="1">
    <location>
        <begin position="57"/>
        <end position="78"/>
    </location>
</feature>
<feature type="topological domain" description="Extracellular" evidence="1">
    <location>
        <begin position="79"/>
        <end position="99"/>
    </location>
</feature>
<feature type="transmembrane region" description="Helical; Name=3" evidence="1">
    <location>
        <begin position="100"/>
        <end position="119"/>
    </location>
</feature>
<feature type="topological domain" description="Cytoplasmic" evidence="1">
    <location>
        <begin position="120"/>
        <end position="138"/>
    </location>
</feature>
<feature type="transmembrane region" description="Helical; Name=4" evidence="1">
    <location>
        <begin position="139"/>
        <end position="157"/>
    </location>
</feature>
<feature type="topological domain" description="Extracellular" evidence="1">
    <location>
        <begin position="158"/>
        <end position="195"/>
    </location>
</feature>
<feature type="transmembrane region" description="Helical; Name=5" evidence="1">
    <location>
        <begin position="196"/>
        <end position="218"/>
    </location>
</feature>
<feature type="topological domain" description="Cytoplasmic" evidence="1">
    <location>
        <begin position="219"/>
        <end position="235"/>
    </location>
</feature>
<feature type="transmembrane region" description="Helical; Name=6" evidence="1">
    <location>
        <begin position="236"/>
        <end position="259"/>
    </location>
</feature>
<feature type="topological domain" description="Extracellular" evidence="1">
    <location>
        <begin position="260"/>
        <end position="271"/>
    </location>
</feature>
<feature type="transmembrane region" description="Helical; Name=7" evidence="1">
    <location>
        <begin position="272"/>
        <end position="291"/>
    </location>
</feature>
<feature type="topological domain" description="Cytoplasmic" evidence="1">
    <location>
        <begin position="292"/>
        <end position="311"/>
    </location>
</feature>
<feature type="glycosylation site" description="N-linked (GlcNAc...) asparagine" evidence="1">
    <location>
        <position position="4"/>
    </location>
</feature>
<dbReference type="EMBL" id="U53679">
    <property type="protein sequence ID" value="AAB37239.1"/>
    <property type="molecule type" value="Genomic_DNA"/>
</dbReference>
<dbReference type="RefSeq" id="NP_001013438.1">
    <property type="nucleotide sequence ID" value="NM_001013420.1"/>
</dbReference>
<dbReference type="SMR" id="Q95154"/>
<dbReference type="STRING" id="9615.ENSCAFP00000038802"/>
<dbReference type="PaxDb" id="9612-ENSCAFP00000038802"/>
<dbReference type="Ensembl" id="ENSCAFT00030007297.1">
    <property type="protein sequence ID" value="ENSCAFP00030006396.1"/>
    <property type="gene ID" value="ENSCAFG00030003962.1"/>
</dbReference>
<dbReference type="Ensembl" id="ENSCAFT00845012180.1">
    <property type="protein sequence ID" value="ENSCAFP00845009520.1"/>
    <property type="gene ID" value="ENSCAFG00845006861.1"/>
</dbReference>
<dbReference type="GeneID" id="483548"/>
<dbReference type="CTD" id="10798"/>
<dbReference type="VEuPathDB" id="HostDB:ENSCAFG00845006861"/>
<dbReference type="eggNOG" id="ENOG502SIQS">
    <property type="taxonomic scope" value="Eukaryota"/>
</dbReference>
<dbReference type="GeneTree" id="ENSGT01130000278300"/>
<dbReference type="InParanoid" id="Q95154"/>
<dbReference type="OrthoDB" id="9891208at2759"/>
<dbReference type="Proteomes" id="UP000002254">
    <property type="component" value="Unplaced"/>
</dbReference>
<dbReference type="Proteomes" id="UP000694429">
    <property type="component" value="Chromosome 18"/>
</dbReference>
<dbReference type="Proteomes" id="UP000694542">
    <property type="component" value="Unplaced"/>
</dbReference>
<dbReference type="Proteomes" id="UP000805418">
    <property type="component" value="Chromosome 18"/>
</dbReference>
<dbReference type="GO" id="GO:0005886">
    <property type="term" value="C:plasma membrane"/>
    <property type="evidence" value="ECO:0007669"/>
    <property type="project" value="UniProtKB-SubCell"/>
</dbReference>
<dbReference type="GO" id="GO:0004930">
    <property type="term" value="F:G protein-coupled receptor activity"/>
    <property type="evidence" value="ECO:0007669"/>
    <property type="project" value="UniProtKB-KW"/>
</dbReference>
<dbReference type="GO" id="GO:0005549">
    <property type="term" value="F:odorant binding"/>
    <property type="evidence" value="ECO:0000318"/>
    <property type="project" value="GO_Central"/>
</dbReference>
<dbReference type="GO" id="GO:0004984">
    <property type="term" value="F:olfactory receptor activity"/>
    <property type="evidence" value="ECO:0000318"/>
    <property type="project" value="GO_Central"/>
</dbReference>
<dbReference type="GO" id="GO:0007186">
    <property type="term" value="P:G protein-coupled receptor signaling pathway"/>
    <property type="evidence" value="ECO:0000318"/>
    <property type="project" value="GO_Central"/>
</dbReference>
<dbReference type="GO" id="GO:0007608">
    <property type="term" value="P:sensory perception of smell"/>
    <property type="evidence" value="ECO:0000318"/>
    <property type="project" value="GO_Central"/>
</dbReference>
<dbReference type="CDD" id="cd15410">
    <property type="entry name" value="7tmA_OR5D-like"/>
    <property type="match status" value="1"/>
</dbReference>
<dbReference type="FunFam" id="1.10.1220.70:FF:000001">
    <property type="entry name" value="Olfactory receptor"/>
    <property type="match status" value="1"/>
</dbReference>
<dbReference type="FunFam" id="1.20.1070.10:FF:000004">
    <property type="entry name" value="Olfactory receptor"/>
    <property type="match status" value="1"/>
</dbReference>
<dbReference type="Gene3D" id="1.20.1070.10">
    <property type="entry name" value="Rhodopsin 7-helix transmembrane proteins"/>
    <property type="match status" value="1"/>
</dbReference>
<dbReference type="InterPro" id="IPR000276">
    <property type="entry name" value="GPCR_Rhodpsn"/>
</dbReference>
<dbReference type="InterPro" id="IPR017452">
    <property type="entry name" value="GPCR_Rhodpsn_7TM"/>
</dbReference>
<dbReference type="InterPro" id="IPR000725">
    <property type="entry name" value="Olfact_rcpt"/>
</dbReference>
<dbReference type="PANTHER" id="PTHR48018">
    <property type="entry name" value="OLFACTORY RECEPTOR"/>
    <property type="match status" value="1"/>
</dbReference>
<dbReference type="Pfam" id="PF13853">
    <property type="entry name" value="7tm_4"/>
    <property type="match status" value="1"/>
</dbReference>
<dbReference type="PRINTS" id="PR00237">
    <property type="entry name" value="GPCRRHODOPSN"/>
</dbReference>
<dbReference type="PRINTS" id="PR00245">
    <property type="entry name" value="OLFACTORYR"/>
</dbReference>
<dbReference type="SUPFAM" id="SSF81321">
    <property type="entry name" value="Family A G protein-coupled receptor-like"/>
    <property type="match status" value="1"/>
</dbReference>
<dbReference type="PROSITE" id="PS00237">
    <property type="entry name" value="G_PROTEIN_RECEP_F1_1"/>
    <property type="match status" value="1"/>
</dbReference>
<dbReference type="PROSITE" id="PS50262">
    <property type="entry name" value="G_PROTEIN_RECEP_F1_2"/>
    <property type="match status" value="1"/>
</dbReference>
<protein>
    <recommendedName>
        <fullName>Olfactory receptor-like protein OLF1</fullName>
    </recommendedName>
</protein>
<name>OLF1_CANLF</name>
<comment type="function">
    <text>Putative odorant or sperm cell receptor.</text>
</comment>
<comment type="subcellular location">
    <subcellularLocation>
        <location>Cell membrane</location>
        <topology>Multi-pass membrane protein</topology>
    </subcellularLocation>
</comment>
<comment type="similarity">
    <text evidence="2">Belongs to the G-protein coupled receptor 1 family.</text>
</comment>
<accession>Q95154</accession>